<accession>P96682</accession>
<accession>Q797G9</accession>
<dbReference type="EMBL" id="AB001488">
    <property type="protein sequence ID" value="BAA19372.1"/>
    <property type="molecule type" value="Genomic_DNA"/>
</dbReference>
<dbReference type="EMBL" id="AL009126">
    <property type="protein sequence ID" value="CAB12345.1"/>
    <property type="molecule type" value="Genomic_DNA"/>
</dbReference>
<dbReference type="PIR" id="C69780">
    <property type="entry name" value="C69780"/>
</dbReference>
<dbReference type="RefSeq" id="NP_388419.1">
    <property type="nucleotide sequence ID" value="NC_000964.3"/>
</dbReference>
<dbReference type="RefSeq" id="WP_003243530.1">
    <property type="nucleotide sequence ID" value="NZ_OZ025638.1"/>
</dbReference>
<dbReference type="SMR" id="P96682"/>
<dbReference type="FunCoup" id="P96682">
    <property type="interactions" value="62"/>
</dbReference>
<dbReference type="STRING" id="224308.BSU05380"/>
<dbReference type="PaxDb" id="224308-BSU05380"/>
<dbReference type="EnsemblBacteria" id="CAB12345">
    <property type="protein sequence ID" value="CAB12345"/>
    <property type="gene ID" value="BSU_05380"/>
</dbReference>
<dbReference type="GeneID" id="939898"/>
<dbReference type="KEGG" id="bsu:BSU05380"/>
<dbReference type="PATRIC" id="fig|224308.179.peg.575"/>
<dbReference type="eggNOG" id="COG1853">
    <property type="taxonomic scope" value="Bacteria"/>
</dbReference>
<dbReference type="InParanoid" id="P96682"/>
<dbReference type="OrthoDB" id="9794638at2"/>
<dbReference type="PhylomeDB" id="P96682"/>
<dbReference type="BioCyc" id="BSUB:BSU05380-MONOMER"/>
<dbReference type="Proteomes" id="UP000001570">
    <property type="component" value="Chromosome"/>
</dbReference>
<dbReference type="GO" id="GO:0010181">
    <property type="term" value="F:FMN binding"/>
    <property type="evidence" value="ECO:0007669"/>
    <property type="project" value="InterPro"/>
</dbReference>
<dbReference type="GO" id="GO:0016646">
    <property type="term" value="F:oxidoreductase activity, acting on the CH-NH group of donors, NAD or NADP as acceptor"/>
    <property type="evidence" value="ECO:0007669"/>
    <property type="project" value="UniProtKB-ARBA"/>
</dbReference>
<dbReference type="Gene3D" id="2.30.110.10">
    <property type="entry name" value="Electron Transport, Fmn-binding Protein, Chain A"/>
    <property type="match status" value="1"/>
</dbReference>
<dbReference type="InterPro" id="IPR002563">
    <property type="entry name" value="Flavin_Rdtase-like_dom"/>
</dbReference>
<dbReference type="InterPro" id="IPR052174">
    <property type="entry name" value="Flavoredoxin"/>
</dbReference>
<dbReference type="InterPro" id="IPR012349">
    <property type="entry name" value="Split_barrel_FMN-bd"/>
</dbReference>
<dbReference type="PANTHER" id="PTHR43567:SF1">
    <property type="entry name" value="FLAVOREDOXIN"/>
    <property type="match status" value="1"/>
</dbReference>
<dbReference type="PANTHER" id="PTHR43567">
    <property type="entry name" value="FLAVOREDOXIN-RELATED-RELATED"/>
    <property type="match status" value="1"/>
</dbReference>
<dbReference type="Pfam" id="PF01613">
    <property type="entry name" value="Flavin_Reduct"/>
    <property type="match status" value="1"/>
</dbReference>
<dbReference type="SUPFAM" id="SSF50475">
    <property type="entry name" value="FMN-binding split barrel"/>
    <property type="match status" value="1"/>
</dbReference>
<comment type="cofactor">
    <cofactor evidence="1">
        <name>FMN</name>
        <dbReference type="ChEBI" id="CHEBI:58210"/>
    </cofactor>
</comment>
<comment type="similarity">
    <text evidence="2">Belongs to the flavoredoxin family.</text>
</comment>
<organism>
    <name type="scientific">Bacillus subtilis (strain 168)</name>
    <dbReference type="NCBI Taxonomy" id="224308"/>
    <lineage>
        <taxon>Bacteria</taxon>
        <taxon>Bacillati</taxon>
        <taxon>Bacillota</taxon>
        <taxon>Bacilli</taxon>
        <taxon>Bacillales</taxon>
        <taxon>Bacillaceae</taxon>
        <taxon>Bacillus</taxon>
    </lineage>
</organism>
<sequence length="207" mass="23630">MDIKKQDTRRFKEIKPKIMYYGTSTFLLTTLNEDGTTNISPMSSSWALGHYIILGVGLGGKAIDNLERHKECVINLPGPDLWENVERISSYSGKKSIPPLKKQIGFTYKKEKYEAAGLTPLQSKTVSPTRIKECPIQIEAEVKHIRLPEYESSFAIVETQALHFHAEESIILDENHINPSKWSPLIYNFRHYFGLGREVGKTFRSET</sequence>
<reference key="1">
    <citation type="submission" date="1997-03" db="EMBL/GenBank/DDBJ databases">
        <title>A 148 kbp sequence of the region between 35 and 47 degree of the Bacillus subtilis genome.</title>
        <authorList>
            <person name="Kasahara Y."/>
            <person name="Nakai S."/>
            <person name="Lee S."/>
            <person name="Sadaie Y."/>
            <person name="Ogasawara N."/>
        </authorList>
    </citation>
    <scope>NUCLEOTIDE SEQUENCE [GENOMIC DNA]</scope>
    <source>
        <strain>168</strain>
    </source>
</reference>
<reference key="2">
    <citation type="journal article" date="1997" name="Nature">
        <title>The complete genome sequence of the Gram-positive bacterium Bacillus subtilis.</title>
        <authorList>
            <person name="Kunst F."/>
            <person name="Ogasawara N."/>
            <person name="Moszer I."/>
            <person name="Albertini A.M."/>
            <person name="Alloni G."/>
            <person name="Azevedo V."/>
            <person name="Bertero M.G."/>
            <person name="Bessieres P."/>
            <person name="Bolotin A."/>
            <person name="Borchert S."/>
            <person name="Borriss R."/>
            <person name="Boursier L."/>
            <person name="Brans A."/>
            <person name="Braun M."/>
            <person name="Brignell S.C."/>
            <person name="Bron S."/>
            <person name="Brouillet S."/>
            <person name="Bruschi C.V."/>
            <person name="Caldwell B."/>
            <person name="Capuano V."/>
            <person name="Carter N.M."/>
            <person name="Choi S.-K."/>
            <person name="Codani J.-J."/>
            <person name="Connerton I.F."/>
            <person name="Cummings N.J."/>
            <person name="Daniel R.A."/>
            <person name="Denizot F."/>
            <person name="Devine K.M."/>
            <person name="Duesterhoeft A."/>
            <person name="Ehrlich S.D."/>
            <person name="Emmerson P.T."/>
            <person name="Entian K.-D."/>
            <person name="Errington J."/>
            <person name="Fabret C."/>
            <person name="Ferrari E."/>
            <person name="Foulger D."/>
            <person name="Fritz C."/>
            <person name="Fujita M."/>
            <person name="Fujita Y."/>
            <person name="Fuma S."/>
            <person name="Galizzi A."/>
            <person name="Galleron N."/>
            <person name="Ghim S.-Y."/>
            <person name="Glaser P."/>
            <person name="Goffeau A."/>
            <person name="Golightly E.J."/>
            <person name="Grandi G."/>
            <person name="Guiseppi G."/>
            <person name="Guy B.J."/>
            <person name="Haga K."/>
            <person name="Haiech J."/>
            <person name="Harwood C.R."/>
            <person name="Henaut A."/>
            <person name="Hilbert H."/>
            <person name="Holsappel S."/>
            <person name="Hosono S."/>
            <person name="Hullo M.-F."/>
            <person name="Itaya M."/>
            <person name="Jones L.-M."/>
            <person name="Joris B."/>
            <person name="Karamata D."/>
            <person name="Kasahara Y."/>
            <person name="Klaerr-Blanchard M."/>
            <person name="Klein C."/>
            <person name="Kobayashi Y."/>
            <person name="Koetter P."/>
            <person name="Koningstein G."/>
            <person name="Krogh S."/>
            <person name="Kumano M."/>
            <person name="Kurita K."/>
            <person name="Lapidus A."/>
            <person name="Lardinois S."/>
            <person name="Lauber J."/>
            <person name="Lazarevic V."/>
            <person name="Lee S.-M."/>
            <person name="Levine A."/>
            <person name="Liu H."/>
            <person name="Masuda S."/>
            <person name="Mauel C."/>
            <person name="Medigue C."/>
            <person name="Medina N."/>
            <person name="Mellado R.P."/>
            <person name="Mizuno M."/>
            <person name="Moestl D."/>
            <person name="Nakai S."/>
            <person name="Noback M."/>
            <person name="Noone D."/>
            <person name="O'Reilly M."/>
            <person name="Ogawa K."/>
            <person name="Ogiwara A."/>
            <person name="Oudega B."/>
            <person name="Park S.-H."/>
            <person name="Parro V."/>
            <person name="Pohl T.M."/>
            <person name="Portetelle D."/>
            <person name="Porwollik S."/>
            <person name="Prescott A.M."/>
            <person name="Presecan E."/>
            <person name="Pujic P."/>
            <person name="Purnelle B."/>
            <person name="Rapoport G."/>
            <person name="Rey M."/>
            <person name="Reynolds S."/>
            <person name="Rieger M."/>
            <person name="Rivolta C."/>
            <person name="Rocha E."/>
            <person name="Roche B."/>
            <person name="Rose M."/>
            <person name="Sadaie Y."/>
            <person name="Sato T."/>
            <person name="Scanlan E."/>
            <person name="Schleich S."/>
            <person name="Schroeter R."/>
            <person name="Scoffone F."/>
            <person name="Sekiguchi J."/>
            <person name="Sekowska A."/>
            <person name="Seror S.J."/>
            <person name="Serror P."/>
            <person name="Shin B.-S."/>
            <person name="Soldo B."/>
            <person name="Sorokin A."/>
            <person name="Tacconi E."/>
            <person name="Takagi T."/>
            <person name="Takahashi H."/>
            <person name="Takemaru K."/>
            <person name="Takeuchi M."/>
            <person name="Tamakoshi A."/>
            <person name="Tanaka T."/>
            <person name="Terpstra P."/>
            <person name="Tognoni A."/>
            <person name="Tosato V."/>
            <person name="Uchiyama S."/>
            <person name="Vandenbol M."/>
            <person name="Vannier F."/>
            <person name="Vassarotti A."/>
            <person name="Viari A."/>
            <person name="Wambutt R."/>
            <person name="Wedler E."/>
            <person name="Wedler H."/>
            <person name="Weitzenegger T."/>
            <person name="Winters P."/>
            <person name="Wipat A."/>
            <person name="Yamamoto H."/>
            <person name="Yamane K."/>
            <person name="Yasumoto K."/>
            <person name="Yata K."/>
            <person name="Yoshida K."/>
            <person name="Yoshikawa H.-F."/>
            <person name="Zumstein E."/>
            <person name="Yoshikawa H."/>
            <person name="Danchin A."/>
        </authorList>
    </citation>
    <scope>NUCLEOTIDE SEQUENCE [LARGE SCALE GENOMIC DNA]</scope>
    <source>
        <strain>168</strain>
    </source>
</reference>
<gene>
    <name type="primary">ydfE</name>
    <name type="ordered locus">BSU05380</name>
</gene>
<proteinExistence type="inferred from homology"/>
<protein>
    <recommendedName>
        <fullName>Uncharacterized protein YdfE</fullName>
    </recommendedName>
</protein>
<evidence type="ECO:0000250" key="1"/>
<evidence type="ECO:0000305" key="2"/>
<keyword id="KW-0285">Flavoprotein</keyword>
<keyword id="KW-1185">Reference proteome</keyword>
<name>YDFE_BACSU</name>
<feature type="chain" id="PRO_0000390399" description="Uncharacterized protein YdfE">
    <location>
        <begin position="1"/>
        <end position="207"/>
    </location>
</feature>